<comment type="function">
    <text evidence="1">One of the primary rRNA binding proteins, this protein initially binds near the 5'-end of the 23S rRNA. It is important during the early stages of 50S assembly. It makes multiple contacts with different domains of the 23S rRNA in the assembled 50S subunit and ribosome.</text>
</comment>
<comment type="function">
    <text evidence="1">Forms part of the polypeptide exit tunnel.</text>
</comment>
<comment type="subunit">
    <text evidence="1">Part of the 50S ribosomal subunit.</text>
</comment>
<comment type="similarity">
    <text evidence="1">Belongs to the universal ribosomal protein uL4 family.</text>
</comment>
<organism>
    <name type="scientific">Xanthomonas euvesicatoria pv. vesicatoria (strain 85-10)</name>
    <name type="common">Xanthomonas campestris pv. vesicatoria</name>
    <dbReference type="NCBI Taxonomy" id="316273"/>
    <lineage>
        <taxon>Bacteria</taxon>
        <taxon>Pseudomonadati</taxon>
        <taxon>Pseudomonadota</taxon>
        <taxon>Gammaproteobacteria</taxon>
        <taxon>Lysobacterales</taxon>
        <taxon>Lysobacteraceae</taxon>
        <taxon>Xanthomonas</taxon>
    </lineage>
</organism>
<evidence type="ECO:0000255" key="1">
    <source>
        <dbReference type="HAMAP-Rule" id="MF_01328"/>
    </source>
</evidence>
<evidence type="ECO:0000256" key="2">
    <source>
        <dbReference type="SAM" id="MobiDB-lite"/>
    </source>
</evidence>
<evidence type="ECO:0000305" key="3"/>
<sequence>MELVITGSNNKVSVSDAVFGREFSEDLVHQVVVAYRNAGRAGTKAQKTRSEVAGTTKKSKKQKGGGARHGALTAPIFVGGGVTFAAKPRSFEQKVNRKMYRAAICAIFSELNRQGRLMIVDAFDLEATKTKGLIEKLKGLEVGKRPLIVTEEASEHLYLSARNLPYVQVRDVQGLDPVALVGADTVVITADAVKKVEEWLA</sequence>
<keyword id="KW-0687">Ribonucleoprotein</keyword>
<keyword id="KW-0689">Ribosomal protein</keyword>
<keyword id="KW-0694">RNA-binding</keyword>
<keyword id="KW-0699">rRNA-binding</keyword>
<reference key="1">
    <citation type="journal article" date="2005" name="J. Bacteriol.">
        <title>Insights into genome plasticity and pathogenicity of the plant pathogenic Bacterium Xanthomonas campestris pv. vesicatoria revealed by the complete genome sequence.</title>
        <authorList>
            <person name="Thieme F."/>
            <person name="Koebnik R."/>
            <person name="Bekel T."/>
            <person name="Berger C."/>
            <person name="Boch J."/>
            <person name="Buettner D."/>
            <person name="Caldana C."/>
            <person name="Gaigalat L."/>
            <person name="Goesmann A."/>
            <person name="Kay S."/>
            <person name="Kirchner O."/>
            <person name="Lanz C."/>
            <person name="Linke B."/>
            <person name="McHardy A.C."/>
            <person name="Meyer F."/>
            <person name="Mittenhuber G."/>
            <person name="Nies D.H."/>
            <person name="Niesbach-Kloesgen U."/>
            <person name="Patschkowski T."/>
            <person name="Rueckert C."/>
            <person name="Rupp O."/>
            <person name="Schneiker S."/>
            <person name="Schuster S.C."/>
            <person name="Vorhoelter F.J."/>
            <person name="Weber E."/>
            <person name="Puehler A."/>
            <person name="Bonas U."/>
            <person name="Bartels D."/>
            <person name="Kaiser O."/>
        </authorList>
    </citation>
    <scope>NUCLEOTIDE SEQUENCE [LARGE SCALE GENOMIC DNA]</scope>
    <source>
        <strain>85-10</strain>
    </source>
</reference>
<gene>
    <name evidence="1" type="primary">rplD</name>
    <name type="ordered locus">XCV1000</name>
</gene>
<name>RL4_XANE5</name>
<dbReference type="EMBL" id="AM039952">
    <property type="protein sequence ID" value="CAJ22631.1"/>
    <property type="molecule type" value="Genomic_DNA"/>
</dbReference>
<dbReference type="RefSeq" id="WP_005917124.1">
    <property type="nucleotide sequence ID" value="NZ_CP017190.1"/>
</dbReference>
<dbReference type="SMR" id="Q3BWY2"/>
<dbReference type="STRING" id="456327.BJD11_17735"/>
<dbReference type="GeneID" id="97509337"/>
<dbReference type="KEGG" id="xcv:XCV1000"/>
<dbReference type="eggNOG" id="COG0088">
    <property type="taxonomic scope" value="Bacteria"/>
</dbReference>
<dbReference type="HOGENOM" id="CLU_041575_5_2_6"/>
<dbReference type="Proteomes" id="UP000007069">
    <property type="component" value="Chromosome"/>
</dbReference>
<dbReference type="GO" id="GO:1990904">
    <property type="term" value="C:ribonucleoprotein complex"/>
    <property type="evidence" value="ECO:0007669"/>
    <property type="project" value="UniProtKB-KW"/>
</dbReference>
<dbReference type="GO" id="GO:0005840">
    <property type="term" value="C:ribosome"/>
    <property type="evidence" value="ECO:0007669"/>
    <property type="project" value="UniProtKB-KW"/>
</dbReference>
<dbReference type="GO" id="GO:0019843">
    <property type="term" value="F:rRNA binding"/>
    <property type="evidence" value="ECO:0007669"/>
    <property type="project" value="UniProtKB-UniRule"/>
</dbReference>
<dbReference type="GO" id="GO:0003735">
    <property type="term" value="F:structural constituent of ribosome"/>
    <property type="evidence" value="ECO:0007669"/>
    <property type="project" value="InterPro"/>
</dbReference>
<dbReference type="GO" id="GO:0006412">
    <property type="term" value="P:translation"/>
    <property type="evidence" value="ECO:0007669"/>
    <property type="project" value="UniProtKB-UniRule"/>
</dbReference>
<dbReference type="FunFam" id="3.40.1370.10:FF:000007">
    <property type="entry name" value="50S ribosomal protein L4"/>
    <property type="match status" value="1"/>
</dbReference>
<dbReference type="Gene3D" id="3.40.1370.10">
    <property type="match status" value="1"/>
</dbReference>
<dbReference type="HAMAP" id="MF_01328_B">
    <property type="entry name" value="Ribosomal_uL4_B"/>
    <property type="match status" value="1"/>
</dbReference>
<dbReference type="InterPro" id="IPR002136">
    <property type="entry name" value="Ribosomal_uL4"/>
</dbReference>
<dbReference type="InterPro" id="IPR013005">
    <property type="entry name" value="Ribosomal_uL4-like"/>
</dbReference>
<dbReference type="InterPro" id="IPR023574">
    <property type="entry name" value="Ribosomal_uL4_dom_sf"/>
</dbReference>
<dbReference type="NCBIfam" id="TIGR03953">
    <property type="entry name" value="rplD_bact"/>
    <property type="match status" value="1"/>
</dbReference>
<dbReference type="PANTHER" id="PTHR10746">
    <property type="entry name" value="50S RIBOSOMAL PROTEIN L4"/>
    <property type="match status" value="1"/>
</dbReference>
<dbReference type="PANTHER" id="PTHR10746:SF6">
    <property type="entry name" value="LARGE RIBOSOMAL SUBUNIT PROTEIN UL4M"/>
    <property type="match status" value="1"/>
</dbReference>
<dbReference type="Pfam" id="PF00573">
    <property type="entry name" value="Ribosomal_L4"/>
    <property type="match status" value="1"/>
</dbReference>
<dbReference type="SUPFAM" id="SSF52166">
    <property type="entry name" value="Ribosomal protein L4"/>
    <property type="match status" value="1"/>
</dbReference>
<protein>
    <recommendedName>
        <fullName evidence="1">Large ribosomal subunit protein uL4</fullName>
    </recommendedName>
    <alternativeName>
        <fullName evidence="3">50S ribosomal protein L4</fullName>
    </alternativeName>
</protein>
<proteinExistence type="inferred from homology"/>
<accession>Q3BWY2</accession>
<feature type="chain" id="PRO_0000242462" description="Large ribosomal subunit protein uL4">
    <location>
        <begin position="1"/>
        <end position="201"/>
    </location>
</feature>
<feature type="region of interest" description="Disordered" evidence="2">
    <location>
        <begin position="44"/>
        <end position="68"/>
    </location>
</feature>